<keyword id="KW-0067">ATP-binding</keyword>
<keyword id="KW-0460">Magnesium</keyword>
<keyword id="KW-0547">Nucleotide-binding</keyword>
<keyword id="KW-0554">One-carbon metabolism</keyword>
<keyword id="KW-1185">Reference proteome</keyword>
<keyword id="KW-0808">Transferase</keyword>
<reference key="1">
    <citation type="journal article" date="2005" name="J. Bacteriol.">
        <title>The genome of Sulfolobus acidocaldarius, a model organism of the Crenarchaeota.</title>
        <authorList>
            <person name="Chen L."/>
            <person name="Bruegger K."/>
            <person name="Skovgaard M."/>
            <person name="Redder P."/>
            <person name="She Q."/>
            <person name="Torarinsson E."/>
            <person name="Greve B."/>
            <person name="Awayez M."/>
            <person name="Zibat A."/>
            <person name="Klenk H.-P."/>
            <person name="Garrett R.A."/>
        </authorList>
    </citation>
    <scope>NUCLEOTIDE SEQUENCE [LARGE SCALE GENOMIC DNA]</scope>
    <source>
        <strain>ATCC 33909 / DSM 639 / JCM 8929 / NBRC 15157 / NCIMB 11770</strain>
    </source>
</reference>
<gene>
    <name evidence="1" type="primary">mat</name>
    <name type="ordered locus">Saci_0798</name>
</gene>
<protein>
    <recommendedName>
        <fullName evidence="1">S-adenosylmethionine synthase</fullName>
        <shortName evidence="1">AdoMet synthase</shortName>
        <ecNumber evidence="1">2.5.1.6</ecNumber>
    </recommendedName>
    <alternativeName>
        <fullName evidence="1">Methionine adenosyltransferase</fullName>
    </alternativeName>
</protein>
<organism>
    <name type="scientific">Sulfolobus acidocaldarius (strain ATCC 33909 / DSM 639 / JCM 8929 / NBRC 15157 / NCIMB 11770)</name>
    <dbReference type="NCBI Taxonomy" id="330779"/>
    <lineage>
        <taxon>Archaea</taxon>
        <taxon>Thermoproteota</taxon>
        <taxon>Thermoprotei</taxon>
        <taxon>Sulfolobales</taxon>
        <taxon>Sulfolobaceae</taxon>
        <taxon>Sulfolobus</taxon>
    </lineage>
</organism>
<accession>Q4JAL1</accession>
<evidence type="ECO:0000255" key="1">
    <source>
        <dbReference type="HAMAP-Rule" id="MF_00136"/>
    </source>
</evidence>
<proteinExistence type="inferred from homology"/>
<dbReference type="EC" id="2.5.1.6" evidence="1"/>
<dbReference type="EMBL" id="CP000077">
    <property type="protein sequence ID" value="AAY80168.1"/>
    <property type="molecule type" value="Genomic_DNA"/>
</dbReference>
<dbReference type="RefSeq" id="WP_011277670.1">
    <property type="nucleotide sequence ID" value="NC_007181.1"/>
</dbReference>
<dbReference type="SMR" id="Q4JAL1"/>
<dbReference type="STRING" id="330779.Saci_0798"/>
<dbReference type="GeneID" id="14551312"/>
<dbReference type="KEGG" id="sai:Saci_0798"/>
<dbReference type="PATRIC" id="fig|330779.12.peg.764"/>
<dbReference type="eggNOG" id="arCOG01678">
    <property type="taxonomic scope" value="Archaea"/>
</dbReference>
<dbReference type="HOGENOM" id="CLU_057642_0_0_2"/>
<dbReference type="UniPathway" id="UPA00315">
    <property type="reaction ID" value="UER00080"/>
</dbReference>
<dbReference type="Proteomes" id="UP000001018">
    <property type="component" value="Chromosome"/>
</dbReference>
<dbReference type="GO" id="GO:0005524">
    <property type="term" value="F:ATP binding"/>
    <property type="evidence" value="ECO:0007669"/>
    <property type="project" value="UniProtKB-UniRule"/>
</dbReference>
<dbReference type="GO" id="GO:0000287">
    <property type="term" value="F:magnesium ion binding"/>
    <property type="evidence" value="ECO:0007669"/>
    <property type="project" value="UniProtKB-UniRule"/>
</dbReference>
<dbReference type="GO" id="GO:0004478">
    <property type="term" value="F:methionine adenosyltransferase activity"/>
    <property type="evidence" value="ECO:0007669"/>
    <property type="project" value="UniProtKB-UniRule"/>
</dbReference>
<dbReference type="GO" id="GO:0006730">
    <property type="term" value="P:one-carbon metabolic process"/>
    <property type="evidence" value="ECO:0007669"/>
    <property type="project" value="UniProtKB-KW"/>
</dbReference>
<dbReference type="GO" id="GO:0006556">
    <property type="term" value="P:S-adenosylmethionine biosynthetic process"/>
    <property type="evidence" value="ECO:0007669"/>
    <property type="project" value="UniProtKB-UniRule"/>
</dbReference>
<dbReference type="Gene3D" id="3.30.300.10">
    <property type="match status" value="1"/>
</dbReference>
<dbReference type="Gene3D" id="3.30.300.280">
    <property type="entry name" value="S-adenosylmethionine synthetase, C-terminal domain"/>
    <property type="match status" value="2"/>
</dbReference>
<dbReference type="HAMAP" id="MF_00136">
    <property type="entry name" value="S_AdoMet_synth2"/>
    <property type="match status" value="1"/>
</dbReference>
<dbReference type="InterPro" id="IPR027790">
    <property type="entry name" value="AdoMet_synthase_2_family"/>
</dbReference>
<dbReference type="InterPro" id="IPR042544">
    <property type="entry name" value="AdoMet_synthase_3"/>
</dbReference>
<dbReference type="InterPro" id="IPR002795">
    <property type="entry name" value="S-AdoMet_synthetase_arc"/>
</dbReference>
<dbReference type="NCBIfam" id="NF003365">
    <property type="entry name" value="PRK04439.1-4"/>
    <property type="match status" value="1"/>
</dbReference>
<dbReference type="NCBIfam" id="NF003366">
    <property type="entry name" value="PRK04439.1-5"/>
    <property type="match status" value="1"/>
</dbReference>
<dbReference type="PANTHER" id="PTHR36697">
    <property type="entry name" value="S-ADENOSYLMETHIONINE SYNTHASE"/>
    <property type="match status" value="1"/>
</dbReference>
<dbReference type="PANTHER" id="PTHR36697:SF1">
    <property type="entry name" value="S-ADENOSYLMETHIONINE SYNTHASE"/>
    <property type="match status" value="1"/>
</dbReference>
<dbReference type="Pfam" id="PF01941">
    <property type="entry name" value="AdoMet_Synthase"/>
    <property type="match status" value="1"/>
</dbReference>
<comment type="function">
    <text evidence="1">Catalyzes the formation of S-adenosylmethionine from methionine and ATP.</text>
</comment>
<comment type="catalytic activity">
    <reaction evidence="1">
        <text>L-methionine + ATP + H2O = S-adenosyl-L-methionine + phosphate + diphosphate</text>
        <dbReference type="Rhea" id="RHEA:21080"/>
        <dbReference type="ChEBI" id="CHEBI:15377"/>
        <dbReference type="ChEBI" id="CHEBI:30616"/>
        <dbReference type="ChEBI" id="CHEBI:33019"/>
        <dbReference type="ChEBI" id="CHEBI:43474"/>
        <dbReference type="ChEBI" id="CHEBI:57844"/>
        <dbReference type="ChEBI" id="CHEBI:59789"/>
        <dbReference type="EC" id="2.5.1.6"/>
    </reaction>
</comment>
<comment type="cofactor">
    <cofactor evidence="1">
        <name>Mg(2+)</name>
        <dbReference type="ChEBI" id="CHEBI:18420"/>
    </cofactor>
</comment>
<comment type="pathway">
    <text evidence="1">Amino-acid biosynthesis; S-adenosyl-L-methionine biosynthesis; S-adenosyl-L-methionine from L-methionine: step 1/1.</text>
</comment>
<comment type="similarity">
    <text evidence="1">Belongs to the AdoMet synthase 2 family.</text>
</comment>
<sequence>MAKNINVQQSHWANPDKLEVELAERKGVGHPDYIADSASEEASRKLSLYYLKAFGTILHHNLDKTLVVGGQATPKYKGGDVVQPIYVIVSGRATTEVKTPSGVENIPIGTIIIESVKDWIKENFRYLDVEKHVVVDYKIGKGSTDLVGLFEANKQVPLSNDTSFGVGFAPYSTLENLVLSTERLLNSKEIRSKIPEIGEDIKVMGLRKGKEIELTVAMATISQLIDDLNHYLQVKEEAKQKILDLASKLAPEYSVKVNINTGDKIDKGIVYLTVTGTSAEHGDDGMTGRGNRATGLITPMRPMSLEATAGKNPVNHVGKLYNVLANLIAQKVHKDVKGINGVQVEILGQIGRPINDPLIANVQLAAENITTEIKREVEGITDELLSSVTKLSELILESKTMLF</sequence>
<feature type="chain" id="PRO_0000150040" description="S-adenosylmethionine synthase">
    <location>
        <begin position="1"/>
        <end position="403"/>
    </location>
</feature>
<feature type="binding site" evidence="1">
    <location>
        <begin position="140"/>
        <end position="145"/>
    </location>
    <ligand>
        <name>ATP</name>
        <dbReference type="ChEBI" id="CHEBI:30616"/>
    </ligand>
</feature>
<name>METK_SULAC</name>